<evidence type="ECO:0000250" key="1">
    <source>
        <dbReference type="UniProtKB" id="P46663"/>
    </source>
</evidence>
<evidence type="ECO:0000255" key="2"/>
<evidence type="ECO:0000255" key="3">
    <source>
        <dbReference type="PROSITE-ProRule" id="PRU00521"/>
    </source>
</evidence>
<evidence type="ECO:0000256" key="4">
    <source>
        <dbReference type="SAM" id="MobiDB-lite"/>
    </source>
</evidence>
<evidence type="ECO:0000269" key="5">
    <source>
    </source>
</evidence>
<evidence type="ECO:0000305" key="6"/>
<sequence>MASQASLKLQPSNQSQQAPPNITSCEGAPEAWDLLCRVLPGFVITVCFFGLLGNLLVLSFFLLPWRRWWQQRRQRLTIAEIYLANLAASDLVFVLGLPFWAENVGNRFNWPFGSDLCRVVSGVIKANLFISIFLVVAISQDRYRLLVYPMTSWGNRRRRQAQVTCLLIWVAGGLLSTPTFLLRSVKVVPDLNISACILLFPHEAWHFVRMVELNVLGFLLPLAAILYFNFHILASLRGQKEASRTRCGGPKDSKTMGLILTLVASFLVCWAPYHFFAFLDFLVQVRVIQDCFWKELTDLGLQLANFFAFVNSCLNPLIYVFAGRLFKTRVLGTL</sequence>
<accession>Q61125</accession>
<accession>Q9Z1F4</accession>
<organism>
    <name type="scientific">Mus musculus</name>
    <name type="common">Mouse</name>
    <dbReference type="NCBI Taxonomy" id="10090"/>
    <lineage>
        <taxon>Eukaryota</taxon>
        <taxon>Metazoa</taxon>
        <taxon>Chordata</taxon>
        <taxon>Craniata</taxon>
        <taxon>Vertebrata</taxon>
        <taxon>Euteleostomi</taxon>
        <taxon>Mammalia</taxon>
        <taxon>Eutheria</taxon>
        <taxon>Euarchontoglires</taxon>
        <taxon>Glires</taxon>
        <taxon>Rodentia</taxon>
        <taxon>Myomorpha</taxon>
        <taxon>Muroidea</taxon>
        <taxon>Muridae</taxon>
        <taxon>Murinae</taxon>
        <taxon>Mus</taxon>
        <taxon>Mus</taxon>
    </lineage>
</organism>
<reference key="1">
    <citation type="journal article" date="1996" name="Biochem. Biophys. Res. Commun.">
        <title>Molecular cloning and functional characterization of a mouse bradykinin B1 receptor gene.</title>
        <authorList>
            <person name="Pesquero J.B."/>
            <person name="Pesquero J.L."/>
            <person name="Oliveira S.M."/>
            <person name="Roscher A.A."/>
            <person name="Metzger R."/>
            <person name="Ganten D."/>
            <person name="Bader M."/>
        </authorList>
    </citation>
    <scope>NUCLEOTIDE SEQUENCE [GENOMIC DNA]</scope>
    <scope>INDUCTION</scope>
    <source>
        <strain>129/SvJ</strain>
    </source>
</reference>
<reference key="2">
    <citation type="submission" date="1996-01" db="EMBL/GenBank/DDBJ databases">
        <title>Novel pharmacological selectivity of the cloned murine B1 bradykinin receptor.</title>
        <authorList>
            <person name="Yanagawa T."/>
            <person name="Prado G.N."/>
            <person name="Paquet J.L."/>
            <person name="Bestian S."/>
            <person name="Cousins B."/>
            <person name="Navarro J."/>
        </authorList>
    </citation>
    <scope>NUCLEOTIDE SEQUENCE [GENOMIC DNA]</scope>
</reference>
<keyword id="KW-1003">Cell membrane</keyword>
<keyword id="KW-1015">Disulfide bond</keyword>
<keyword id="KW-0297">G-protein coupled receptor</keyword>
<keyword id="KW-0325">Glycoprotein</keyword>
<keyword id="KW-0472">Membrane</keyword>
<keyword id="KW-0675">Receptor</keyword>
<keyword id="KW-1185">Reference proteome</keyword>
<keyword id="KW-0807">Transducer</keyword>
<keyword id="KW-0812">Transmembrane</keyword>
<keyword id="KW-1133">Transmembrane helix</keyword>
<name>BKRB1_MOUSE</name>
<feature type="chain" id="PRO_0000069184" description="B1 bradykinin receptor">
    <location>
        <begin position="1"/>
        <end position="334"/>
    </location>
</feature>
<feature type="topological domain" description="Extracellular" evidence="2">
    <location>
        <begin position="1"/>
        <end position="41"/>
    </location>
</feature>
<feature type="transmembrane region" description="Helical; Name=1" evidence="2">
    <location>
        <begin position="42"/>
        <end position="62"/>
    </location>
</feature>
<feature type="topological domain" description="Cytoplasmic" evidence="2">
    <location>
        <begin position="63"/>
        <end position="80"/>
    </location>
</feature>
<feature type="transmembrane region" description="Helical; Name=2" evidence="2">
    <location>
        <begin position="81"/>
        <end position="101"/>
    </location>
</feature>
<feature type="topological domain" description="Extracellular" evidence="2">
    <location>
        <begin position="102"/>
        <end position="118"/>
    </location>
</feature>
<feature type="transmembrane region" description="Helical; Name=3" evidence="2">
    <location>
        <begin position="119"/>
        <end position="139"/>
    </location>
</feature>
<feature type="topological domain" description="Cytoplasmic" evidence="2">
    <location>
        <begin position="140"/>
        <end position="161"/>
    </location>
</feature>
<feature type="transmembrane region" description="Helical; Name=4" evidence="2">
    <location>
        <begin position="162"/>
        <end position="182"/>
    </location>
</feature>
<feature type="topological domain" description="Extracellular" evidence="2">
    <location>
        <begin position="183"/>
        <end position="214"/>
    </location>
</feature>
<feature type="transmembrane region" description="Helical; Name=5" evidence="2">
    <location>
        <begin position="215"/>
        <end position="235"/>
    </location>
</feature>
<feature type="topological domain" description="Cytoplasmic" evidence="2">
    <location>
        <begin position="236"/>
        <end position="258"/>
    </location>
</feature>
<feature type="transmembrane region" description="Helical; Name=6" evidence="2">
    <location>
        <begin position="259"/>
        <end position="279"/>
    </location>
</feature>
<feature type="topological domain" description="Extracellular" evidence="2">
    <location>
        <begin position="280"/>
        <end position="302"/>
    </location>
</feature>
<feature type="transmembrane region" description="Helical; Name=7" evidence="2">
    <location>
        <begin position="303"/>
        <end position="323"/>
    </location>
</feature>
<feature type="topological domain" description="Cytoplasmic" evidence="2">
    <location>
        <begin position="324"/>
        <end position="334"/>
    </location>
</feature>
<feature type="region of interest" description="Disordered" evidence="4">
    <location>
        <begin position="1"/>
        <end position="21"/>
    </location>
</feature>
<feature type="compositionally biased region" description="Low complexity" evidence="4">
    <location>
        <begin position="10"/>
        <end position="21"/>
    </location>
</feature>
<feature type="glycosylation site" description="N-linked (GlcNAc...) asparagine" evidence="2">
    <location>
        <position position="13"/>
    </location>
</feature>
<feature type="glycosylation site" description="N-linked (GlcNAc...) asparagine" evidence="2">
    <location>
        <position position="21"/>
    </location>
</feature>
<feature type="glycosylation site" description="N-linked (GlcNAc...) asparagine" evidence="2">
    <location>
        <position position="192"/>
    </location>
</feature>
<feature type="disulfide bond" evidence="3">
    <location>
        <begin position="117"/>
        <end position="196"/>
    </location>
</feature>
<feature type="sequence conflict" description="In Ref. 2; AAD00029." evidence="6" ref="2">
    <original>L</original>
    <variation>V</variation>
    <location>
        <position position="216"/>
    </location>
</feature>
<feature type="sequence conflict" description="In Ref. 2." evidence="6" ref="2">
    <original>L</original>
    <variation>P</variation>
    <location>
        <position position="260"/>
    </location>
</feature>
<feature type="sequence conflict" description="In Ref. 2." evidence="6" ref="2">
    <original>VAS</original>
    <variation>SSL</variation>
    <location>
        <begin position="263"/>
        <end position="265"/>
    </location>
</feature>
<feature type="sequence conflict" description="In Ref. 2; AAD00029." evidence="6" ref="2">
    <original>LGTL</original>
    <variation>WELYKRCTSLKNAVLPSRKELFQLSCWN</variation>
    <location>
        <begin position="331"/>
        <end position="334"/>
    </location>
</feature>
<dbReference type="EMBL" id="U47281">
    <property type="protein sequence ID" value="AAA99778.1"/>
    <property type="molecule type" value="Genomic_DNA"/>
</dbReference>
<dbReference type="EMBL" id="U44436">
    <property type="protein sequence ID" value="AAD00029.1"/>
    <property type="molecule type" value="Genomic_DNA"/>
</dbReference>
<dbReference type="CCDS" id="CCDS26155.1"/>
<dbReference type="PIR" id="JC4681">
    <property type="entry name" value="JC4681"/>
</dbReference>
<dbReference type="RefSeq" id="NP_031565.1">
    <property type="nucleotide sequence ID" value="NM_007539.3"/>
</dbReference>
<dbReference type="SMR" id="Q61125"/>
<dbReference type="FunCoup" id="Q61125">
    <property type="interactions" value="1100"/>
</dbReference>
<dbReference type="STRING" id="10090.ENSMUSP00000045335"/>
<dbReference type="BindingDB" id="Q61125"/>
<dbReference type="ChEMBL" id="CHEMBL1250407"/>
<dbReference type="GuidetoPHARMACOLOGY" id="41"/>
<dbReference type="GlyCosmos" id="Q61125">
    <property type="glycosylation" value="3 sites, No reported glycans"/>
</dbReference>
<dbReference type="GlyGen" id="Q61125">
    <property type="glycosylation" value="3 sites"/>
</dbReference>
<dbReference type="PhosphoSitePlus" id="Q61125"/>
<dbReference type="PaxDb" id="10090-ENSMUSP00000045335"/>
<dbReference type="Antibodypedia" id="153">
    <property type="antibodies" value="316 antibodies from 35 providers"/>
</dbReference>
<dbReference type="DNASU" id="12061"/>
<dbReference type="Ensembl" id="ENSMUST00000041229.5">
    <property type="protein sequence ID" value="ENSMUSP00000045335.5"/>
    <property type="gene ID" value="ENSMUSG00000041347.6"/>
</dbReference>
<dbReference type="Ensembl" id="ENSMUST00000182899.2">
    <property type="protein sequence ID" value="ENSMUSP00000138118.2"/>
    <property type="gene ID" value="ENSMUSG00000041347.6"/>
</dbReference>
<dbReference type="GeneID" id="12061"/>
<dbReference type="KEGG" id="mmu:12061"/>
<dbReference type="UCSC" id="uc007oyn.1">
    <property type="organism name" value="mouse"/>
</dbReference>
<dbReference type="AGR" id="MGI:88144"/>
<dbReference type="CTD" id="623"/>
<dbReference type="MGI" id="MGI:88144">
    <property type="gene designation" value="Bdkrb1"/>
</dbReference>
<dbReference type="VEuPathDB" id="HostDB:ENSMUSG00000041347"/>
<dbReference type="eggNOG" id="KOG3656">
    <property type="taxonomic scope" value="Eukaryota"/>
</dbReference>
<dbReference type="GeneTree" id="ENSGT01130000278308"/>
<dbReference type="HOGENOM" id="CLU_009579_8_3_1"/>
<dbReference type="InParanoid" id="Q61125"/>
<dbReference type="OMA" id="GCFWEEL"/>
<dbReference type="OrthoDB" id="6076970at2759"/>
<dbReference type="PhylomeDB" id="Q61125"/>
<dbReference type="TreeFam" id="TF330024"/>
<dbReference type="Reactome" id="R-MMU-375276">
    <property type="pathway name" value="Peptide ligand-binding receptors"/>
</dbReference>
<dbReference type="Reactome" id="R-MMU-416476">
    <property type="pathway name" value="G alpha (q) signalling events"/>
</dbReference>
<dbReference type="Reactome" id="R-MMU-418594">
    <property type="pathway name" value="G alpha (i) signalling events"/>
</dbReference>
<dbReference type="BioGRID-ORCS" id="12061">
    <property type="hits" value="1 hit in 79 CRISPR screens"/>
</dbReference>
<dbReference type="PRO" id="PR:Q61125"/>
<dbReference type="Proteomes" id="UP000000589">
    <property type="component" value="Chromosome 12"/>
</dbReference>
<dbReference type="RNAct" id="Q61125">
    <property type="molecule type" value="protein"/>
</dbReference>
<dbReference type="Bgee" id="ENSMUSG00000041347">
    <property type="expression patterns" value="Expressed in choroid plexus of fourth ventricle and 30 other cell types or tissues"/>
</dbReference>
<dbReference type="ExpressionAtlas" id="Q61125">
    <property type="expression patterns" value="baseline and differential"/>
</dbReference>
<dbReference type="GO" id="GO:0005886">
    <property type="term" value="C:plasma membrane"/>
    <property type="evidence" value="ECO:0007669"/>
    <property type="project" value="UniProtKB-SubCell"/>
</dbReference>
<dbReference type="GO" id="GO:0004947">
    <property type="term" value="F:bradykinin receptor activity"/>
    <property type="evidence" value="ECO:0007669"/>
    <property type="project" value="Ensembl"/>
</dbReference>
<dbReference type="GO" id="GO:0042277">
    <property type="term" value="F:peptide binding"/>
    <property type="evidence" value="ECO:0000314"/>
    <property type="project" value="MGI"/>
</dbReference>
<dbReference type="GO" id="GO:0016477">
    <property type="term" value="P:cell migration"/>
    <property type="evidence" value="ECO:0007669"/>
    <property type="project" value="Ensembl"/>
</dbReference>
<dbReference type="GO" id="GO:0006954">
    <property type="term" value="P:inflammatory response"/>
    <property type="evidence" value="ECO:0007669"/>
    <property type="project" value="InterPro"/>
</dbReference>
<dbReference type="GO" id="GO:0045776">
    <property type="term" value="P:negative regulation of blood pressure"/>
    <property type="evidence" value="ECO:0007669"/>
    <property type="project" value="Ensembl"/>
</dbReference>
<dbReference type="GO" id="GO:0030308">
    <property type="term" value="P:negative regulation of cell growth"/>
    <property type="evidence" value="ECO:0007669"/>
    <property type="project" value="Ensembl"/>
</dbReference>
<dbReference type="GO" id="GO:0002687">
    <property type="term" value="P:positive regulation of leukocyte migration"/>
    <property type="evidence" value="ECO:0007669"/>
    <property type="project" value="Ensembl"/>
</dbReference>
<dbReference type="GO" id="GO:0051281">
    <property type="term" value="P:positive regulation of release of sequestered calcium ion into cytosol"/>
    <property type="evidence" value="ECO:0007669"/>
    <property type="project" value="Ensembl"/>
</dbReference>
<dbReference type="GO" id="GO:0032496">
    <property type="term" value="P:response to lipopolysaccharide"/>
    <property type="evidence" value="ECO:0000314"/>
    <property type="project" value="MGI"/>
</dbReference>
<dbReference type="GO" id="GO:0009612">
    <property type="term" value="P:response to mechanical stimulus"/>
    <property type="evidence" value="ECO:0007669"/>
    <property type="project" value="InterPro"/>
</dbReference>
<dbReference type="CDD" id="cd15380">
    <property type="entry name" value="7tmA_BK-1"/>
    <property type="match status" value="1"/>
</dbReference>
<dbReference type="FunFam" id="1.20.1070.10:FF:000295">
    <property type="entry name" value="B1 bradykinin receptor"/>
    <property type="match status" value="1"/>
</dbReference>
<dbReference type="Gene3D" id="1.20.1070.10">
    <property type="entry name" value="Rhodopsin 7-helix transmembrane proteins"/>
    <property type="match status" value="1"/>
</dbReference>
<dbReference type="InterPro" id="IPR001186">
    <property type="entry name" value="Brdyknn_1_rcpt"/>
</dbReference>
<dbReference type="InterPro" id="IPR000496">
    <property type="entry name" value="Brdyknn_rcpt"/>
</dbReference>
<dbReference type="InterPro" id="IPR050119">
    <property type="entry name" value="CCR1-9-like"/>
</dbReference>
<dbReference type="InterPro" id="IPR000276">
    <property type="entry name" value="GPCR_Rhodpsn"/>
</dbReference>
<dbReference type="InterPro" id="IPR017452">
    <property type="entry name" value="GPCR_Rhodpsn_7TM"/>
</dbReference>
<dbReference type="PANTHER" id="PTHR10489:SF957">
    <property type="entry name" value="B2 BRADYKININ RECEPTOR"/>
    <property type="match status" value="1"/>
</dbReference>
<dbReference type="PANTHER" id="PTHR10489">
    <property type="entry name" value="CELL ADHESION MOLECULE"/>
    <property type="match status" value="1"/>
</dbReference>
<dbReference type="Pfam" id="PF00001">
    <property type="entry name" value="7tm_1"/>
    <property type="match status" value="1"/>
</dbReference>
<dbReference type="PRINTS" id="PR00425">
    <property type="entry name" value="BRADYKININR"/>
</dbReference>
<dbReference type="PRINTS" id="PR00993">
    <property type="entry name" value="BRADYKINNB1R"/>
</dbReference>
<dbReference type="PRINTS" id="PR00237">
    <property type="entry name" value="GPCRRHODOPSN"/>
</dbReference>
<dbReference type="SUPFAM" id="SSF81321">
    <property type="entry name" value="Family A G protein-coupled receptor-like"/>
    <property type="match status" value="1"/>
</dbReference>
<dbReference type="PROSITE" id="PS50262">
    <property type="entry name" value="G_PROTEIN_RECEP_F1_2"/>
    <property type="match status" value="1"/>
</dbReference>
<proteinExistence type="evidence at transcript level"/>
<protein>
    <recommendedName>
        <fullName>B1 bradykinin receptor</fullName>
        <shortName>B1R</shortName>
        <shortName>BK-1 receptor</shortName>
    </recommendedName>
</protein>
<gene>
    <name type="primary">Bdkrb1</name>
    <name type="synonym">Bdkrb</name>
</gene>
<comment type="function">
    <text evidence="1">This is a receptor for bradykinin. Could be a factor in chronic pain and inflammation.</text>
</comment>
<comment type="subcellular location">
    <subcellularLocation>
        <location evidence="1">Cell membrane</location>
        <topology evidence="2">Multi-pass membrane protein</topology>
    </subcellularLocation>
</comment>
<comment type="tissue specificity">
    <text>Expressed in heart, liver and lung.</text>
</comment>
<comment type="induction">
    <text evidence="5">By lipopolysaccharide (LPS) in heart, liver and lung five hours after treatment.</text>
</comment>
<comment type="similarity">
    <text evidence="3">Belongs to the G-protein coupled receptor 1 family. Bradykinin receptor subfamily. BDKRB1 sub-subfamily.</text>
</comment>